<accession>A5FZB9</accession>
<dbReference type="EC" id="4.3.1.3" evidence="1"/>
<dbReference type="EMBL" id="CP000697">
    <property type="protein sequence ID" value="ABQ30951.1"/>
    <property type="molecule type" value="Genomic_DNA"/>
</dbReference>
<dbReference type="RefSeq" id="WP_007422583.1">
    <property type="nucleotide sequence ID" value="NC_009484.1"/>
</dbReference>
<dbReference type="SMR" id="A5FZB9"/>
<dbReference type="STRING" id="349163.Acry_1747"/>
<dbReference type="KEGG" id="acr:Acry_1747"/>
<dbReference type="eggNOG" id="COG2986">
    <property type="taxonomic scope" value="Bacteria"/>
</dbReference>
<dbReference type="HOGENOM" id="CLU_014801_4_0_5"/>
<dbReference type="UniPathway" id="UPA00379">
    <property type="reaction ID" value="UER00549"/>
</dbReference>
<dbReference type="Proteomes" id="UP000000245">
    <property type="component" value="Chromosome"/>
</dbReference>
<dbReference type="GO" id="GO:0005737">
    <property type="term" value="C:cytoplasm"/>
    <property type="evidence" value="ECO:0007669"/>
    <property type="project" value="UniProtKB-SubCell"/>
</dbReference>
<dbReference type="GO" id="GO:0004397">
    <property type="term" value="F:histidine ammonia-lyase activity"/>
    <property type="evidence" value="ECO:0007669"/>
    <property type="project" value="UniProtKB-UniRule"/>
</dbReference>
<dbReference type="GO" id="GO:0019556">
    <property type="term" value="P:L-histidine catabolic process to glutamate and formamide"/>
    <property type="evidence" value="ECO:0007669"/>
    <property type="project" value="UniProtKB-UniPathway"/>
</dbReference>
<dbReference type="GO" id="GO:0019557">
    <property type="term" value="P:L-histidine catabolic process to glutamate and formate"/>
    <property type="evidence" value="ECO:0007669"/>
    <property type="project" value="UniProtKB-UniPathway"/>
</dbReference>
<dbReference type="CDD" id="cd00332">
    <property type="entry name" value="PAL-HAL"/>
    <property type="match status" value="1"/>
</dbReference>
<dbReference type="FunFam" id="1.10.275.10:FF:000005">
    <property type="entry name" value="Histidine ammonia-lyase"/>
    <property type="match status" value="1"/>
</dbReference>
<dbReference type="FunFam" id="1.20.200.10:FF:000003">
    <property type="entry name" value="Histidine ammonia-lyase"/>
    <property type="match status" value="1"/>
</dbReference>
<dbReference type="Gene3D" id="1.20.200.10">
    <property type="entry name" value="Fumarase/aspartase (Central domain)"/>
    <property type="match status" value="1"/>
</dbReference>
<dbReference type="Gene3D" id="1.10.275.10">
    <property type="entry name" value="Fumarase/aspartase (N-terminal domain)"/>
    <property type="match status" value="1"/>
</dbReference>
<dbReference type="HAMAP" id="MF_00229">
    <property type="entry name" value="His_ammonia_lyase"/>
    <property type="match status" value="1"/>
</dbReference>
<dbReference type="InterPro" id="IPR001106">
    <property type="entry name" value="Aromatic_Lyase"/>
</dbReference>
<dbReference type="InterPro" id="IPR024083">
    <property type="entry name" value="Fumarase/histidase_N"/>
</dbReference>
<dbReference type="InterPro" id="IPR005921">
    <property type="entry name" value="HutH"/>
</dbReference>
<dbReference type="InterPro" id="IPR008948">
    <property type="entry name" value="L-Aspartase-like"/>
</dbReference>
<dbReference type="InterPro" id="IPR022313">
    <property type="entry name" value="Phe/His_NH3-lyase_AS"/>
</dbReference>
<dbReference type="NCBIfam" id="TIGR01225">
    <property type="entry name" value="hutH"/>
    <property type="match status" value="1"/>
</dbReference>
<dbReference type="NCBIfam" id="NF006871">
    <property type="entry name" value="PRK09367.1"/>
    <property type="match status" value="1"/>
</dbReference>
<dbReference type="PANTHER" id="PTHR10362">
    <property type="entry name" value="HISTIDINE AMMONIA-LYASE"/>
    <property type="match status" value="1"/>
</dbReference>
<dbReference type="Pfam" id="PF00221">
    <property type="entry name" value="Lyase_aromatic"/>
    <property type="match status" value="1"/>
</dbReference>
<dbReference type="SUPFAM" id="SSF48557">
    <property type="entry name" value="L-aspartase-like"/>
    <property type="match status" value="1"/>
</dbReference>
<dbReference type="PROSITE" id="PS00488">
    <property type="entry name" value="PAL_HISTIDASE"/>
    <property type="match status" value="1"/>
</dbReference>
<sequence>MIISPGTMRLADWRAVQEGDAARLDAGCRAAVEAAAGCVAAILERDEAVYGINTGFGRLASTRIEPADLATLQRNLVLSHAAGVGEALPAPIVRMVIALKLASLARGASGVRWETIEALQGLLDHDILPVIPAQGSVGASGDLAPLAHMTCALLGIGEVLGAAGREDAAAALGRAGMAPLVLGPKEGLALLNGTQVSTAIALTGLFRAERLCRAALLTGALTTDAARGSDAPFDPRIHALRGHAGQMAVAAALRTLLAGSGIRDSHRIGDPRVQDPYSLRCQPQVMGAVFDLLGQAGRTLATEANGVSDNPLVFAETGEVISGGNFHAEYVAFAADQIALAIAEAGSLAERRIALLVDPAHSGLPAFLTRAPGLNSGYMIPQVTAAALVAENRMLAHPASVDSIPTSANQEDHVSMATHGAMRLLRMADNLSHVLAIEYLMAAQGIDLLAPLATSAPLGRMHAVLRESVPVLGEDRLMAPDIARARALIESGAAERAAGCDALPELDA</sequence>
<comment type="catalytic activity">
    <reaction evidence="1">
        <text>L-histidine = trans-urocanate + NH4(+)</text>
        <dbReference type="Rhea" id="RHEA:21232"/>
        <dbReference type="ChEBI" id="CHEBI:17771"/>
        <dbReference type="ChEBI" id="CHEBI:28938"/>
        <dbReference type="ChEBI" id="CHEBI:57595"/>
        <dbReference type="EC" id="4.3.1.3"/>
    </reaction>
</comment>
<comment type="pathway">
    <text evidence="1">Amino-acid degradation; L-histidine degradation into L-glutamate; N-formimidoyl-L-glutamate from L-histidine: step 1/3.</text>
</comment>
<comment type="subcellular location">
    <subcellularLocation>
        <location evidence="1">Cytoplasm</location>
    </subcellularLocation>
</comment>
<comment type="PTM">
    <text evidence="1">Contains an active site 4-methylidene-imidazol-5-one (MIO), which is formed autocatalytically by cyclization and dehydration of residues Ala-Ser-Gly.</text>
</comment>
<comment type="similarity">
    <text evidence="1">Belongs to the PAL/histidase family.</text>
</comment>
<evidence type="ECO:0000255" key="1">
    <source>
        <dbReference type="HAMAP-Rule" id="MF_00229"/>
    </source>
</evidence>
<feature type="chain" id="PRO_0000336579" description="Histidine ammonia-lyase">
    <location>
        <begin position="1"/>
        <end position="508"/>
    </location>
</feature>
<feature type="modified residue" description="2,3-didehydroalanine (Ser)" evidence="1">
    <location>
        <position position="140"/>
    </location>
</feature>
<feature type="cross-link" description="5-imidazolinone (Ala-Gly)" evidence="1">
    <location>
        <begin position="139"/>
        <end position="141"/>
    </location>
</feature>
<gene>
    <name evidence="1" type="primary">hutH</name>
    <name type="ordered locus">Acry_1747</name>
</gene>
<keyword id="KW-0963">Cytoplasm</keyword>
<keyword id="KW-0369">Histidine metabolism</keyword>
<keyword id="KW-0456">Lyase</keyword>
<keyword id="KW-1185">Reference proteome</keyword>
<proteinExistence type="inferred from homology"/>
<name>HUTH_ACICJ</name>
<reference key="1">
    <citation type="submission" date="2007-05" db="EMBL/GenBank/DDBJ databases">
        <title>Complete sequence of chromosome of Acidiphilium cryptum JF-5.</title>
        <authorList>
            <consortium name="US DOE Joint Genome Institute"/>
            <person name="Copeland A."/>
            <person name="Lucas S."/>
            <person name="Lapidus A."/>
            <person name="Barry K."/>
            <person name="Detter J.C."/>
            <person name="Glavina del Rio T."/>
            <person name="Hammon N."/>
            <person name="Israni S."/>
            <person name="Dalin E."/>
            <person name="Tice H."/>
            <person name="Pitluck S."/>
            <person name="Sims D."/>
            <person name="Brettin T."/>
            <person name="Bruce D."/>
            <person name="Han C."/>
            <person name="Schmutz J."/>
            <person name="Larimer F."/>
            <person name="Land M."/>
            <person name="Hauser L."/>
            <person name="Kyrpides N."/>
            <person name="Kim E."/>
            <person name="Magnuson T."/>
            <person name="Richardson P."/>
        </authorList>
    </citation>
    <scope>NUCLEOTIDE SEQUENCE [LARGE SCALE GENOMIC DNA]</scope>
    <source>
        <strain>JF-5</strain>
    </source>
</reference>
<organism>
    <name type="scientific">Acidiphilium cryptum (strain JF-5)</name>
    <dbReference type="NCBI Taxonomy" id="349163"/>
    <lineage>
        <taxon>Bacteria</taxon>
        <taxon>Pseudomonadati</taxon>
        <taxon>Pseudomonadota</taxon>
        <taxon>Alphaproteobacteria</taxon>
        <taxon>Acetobacterales</taxon>
        <taxon>Acidocellaceae</taxon>
        <taxon>Acidiphilium</taxon>
    </lineage>
</organism>
<protein>
    <recommendedName>
        <fullName evidence="1">Histidine ammonia-lyase</fullName>
        <shortName evidence="1">Histidase</shortName>
        <ecNumber evidence="1">4.3.1.3</ecNumber>
    </recommendedName>
</protein>